<organism>
    <name type="scientific">Schizosaccharomyces pombe (strain 972 / ATCC 24843)</name>
    <name type="common">Fission yeast</name>
    <dbReference type="NCBI Taxonomy" id="284812"/>
    <lineage>
        <taxon>Eukaryota</taxon>
        <taxon>Fungi</taxon>
        <taxon>Dikarya</taxon>
        <taxon>Ascomycota</taxon>
        <taxon>Taphrinomycotina</taxon>
        <taxon>Schizosaccharomycetes</taxon>
        <taxon>Schizosaccharomycetales</taxon>
        <taxon>Schizosaccharomycetaceae</taxon>
        <taxon>Schizosaccharomyces</taxon>
    </lineage>
</organism>
<name>MEU29_SCHPO</name>
<accession>O13980</accession>
<dbReference type="EMBL" id="CU329670">
    <property type="protein sequence ID" value="CAB11601.1"/>
    <property type="molecule type" value="Genomic_DNA"/>
</dbReference>
<dbReference type="PIR" id="T38385">
    <property type="entry name" value="T38385"/>
</dbReference>
<dbReference type="RefSeq" id="NP_593809.1">
    <property type="nucleotide sequence ID" value="NM_001019238.2"/>
</dbReference>
<dbReference type="BioGRID" id="279173">
    <property type="interactions" value="3"/>
</dbReference>
<dbReference type="STRING" id="284812.O13980"/>
<dbReference type="GlyCosmos" id="O13980">
    <property type="glycosylation" value="1 site, No reported glycans"/>
</dbReference>
<dbReference type="PaxDb" id="4896-SPAC25H1.05.1"/>
<dbReference type="EnsemblFungi" id="SPAC25H1.05.1">
    <property type="protein sequence ID" value="SPAC25H1.05.1:pep"/>
    <property type="gene ID" value="SPAC25H1.05"/>
</dbReference>
<dbReference type="GeneID" id="2542722"/>
<dbReference type="KEGG" id="spo:2542722"/>
<dbReference type="PomBase" id="SPAC25H1.05">
    <property type="gene designation" value="meu29"/>
</dbReference>
<dbReference type="VEuPathDB" id="FungiDB:SPAC25H1.05"/>
<dbReference type="HOGENOM" id="CLU_1240757_0_0_1"/>
<dbReference type="InParanoid" id="O13980"/>
<dbReference type="OMA" id="AICQHNQ"/>
<dbReference type="PRO" id="PR:O13980"/>
<dbReference type="Proteomes" id="UP000002485">
    <property type="component" value="Chromosome I"/>
</dbReference>
<dbReference type="GO" id="GO:0000324">
    <property type="term" value="C:fungal-type vacuole"/>
    <property type="evidence" value="ECO:0007005"/>
    <property type="project" value="PomBase"/>
</dbReference>
<dbReference type="GO" id="GO:0005794">
    <property type="term" value="C:Golgi apparatus"/>
    <property type="evidence" value="ECO:0007005"/>
    <property type="project" value="PomBase"/>
</dbReference>
<dbReference type="GO" id="GO:0016020">
    <property type="term" value="C:membrane"/>
    <property type="evidence" value="ECO:0007669"/>
    <property type="project" value="UniProtKB-SubCell"/>
</dbReference>
<dbReference type="GO" id="GO:0070588">
    <property type="term" value="P:calcium ion transmembrane transport"/>
    <property type="evidence" value="ECO:0000266"/>
    <property type="project" value="PomBase"/>
</dbReference>
<dbReference type="GO" id="GO:0051321">
    <property type="term" value="P:meiotic cell cycle"/>
    <property type="evidence" value="ECO:0007669"/>
    <property type="project" value="UniProtKB-KW"/>
</dbReference>
<evidence type="ECO:0000255" key="1"/>
<evidence type="ECO:0000305" key="2"/>
<protein>
    <recommendedName>
        <fullName>Meiotic expression up-regulated protein 29</fullName>
    </recommendedName>
</protein>
<comment type="subcellular location">
    <subcellularLocation>
        <location evidence="2">Membrane</location>
        <topology evidence="2">Single-pass type I membrane protein</topology>
    </subcellularLocation>
</comment>
<reference key="1">
    <citation type="journal article" date="2002" name="Nature">
        <title>The genome sequence of Schizosaccharomyces pombe.</title>
        <authorList>
            <person name="Wood V."/>
            <person name="Gwilliam R."/>
            <person name="Rajandream M.A."/>
            <person name="Lyne M.H."/>
            <person name="Lyne R."/>
            <person name="Stewart A."/>
            <person name="Sgouros J.G."/>
            <person name="Peat N."/>
            <person name="Hayles J."/>
            <person name="Baker S.G."/>
            <person name="Basham D."/>
            <person name="Bowman S."/>
            <person name="Brooks K."/>
            <person name="Brown D."/>
            <person name="Brown S."/>
            <person name="Chillingworth T."/>
            <person name="Churcher C.M."/>
            <person name="Collins M."/>
            <person name="Connor R."/>
            <person name="Cronin A."/>
            <person name="Davis P."/>
            <person name="Feltwell T."/>
            <person name="Fraser A."/>
            <person name="Gentles S."/>
            <person name="Goble A."/>
            <person name="Hamlin N."/>
            <person name="Harris D.E."/>
            <person name="Hidalgo J."/>
            <person name="Hodgson G."/>
            <person name="Holroyd S."/>
            <person name="Hornsby T."/>
            <person name="Howarth S."/>
            <person name="Huckle E.J."/>
            <person name="Hunt S."/>
            <person name="Jagels K."/>
            <person name="James K.D."/>
            <person name="Jones L."/>
            <person name="Jones M."/>
            <person name="Leather S."/>
            <person name="McDonald S."/>
            <person name="McLean J."/>
            <person name="Mooney P."/>
            <person name="Moule S."/>
            <person name="Mungall K.L."/>
            <person name="Murphy L.D."/>
            <person name="Niblett D."/>
            <person name="Odell C."/>
            <person name="Oliver K."/>
            <person name="O'Neil S."/>
            <person name="Pearson D."/>
            <person name="Quail M.A."/>
            <person name="Rabbinowitsch E."/>
            <person name="Rutherford K.M."/>
            <person name="Rutter S."/>
            <person name="Saunders D."/>
            <person name="Seeger K."/>
            <person name="Sharp S."/>
            <person name="Skelton J."/>
            <person name="Simmonds M.N."/>
            <person name="Squares R."/>
            <person name="Squares S."/>
            <person name="Stevens K."/>
            <person name="Taylor K."/>
            <person name="Taylor R.G."/>
            <person name="Tivey A."/>
            <person name="Walsh S.V."/>
            <person name="Warren T."/>
            <person name="Whitehead S."/>
            <person name="Woodward J.R."/>
            <person name="Volckaert G."/>
            <person name="Aert R."/>
            <person name="Robben J."/>
            <person name="Grymonprez B."/>
            <person name="Weltjens I."/>
            <person name="Vanstreels E."/>
            <person name="Rieger M."/>
            <person name="Schaefer M."/>
            <person name="Mueller-Auer S."/>
            <person name="Gabel C."/>
            <person name="Fuchs M."/>
            <person name="Duesterhoeft A."/>
            <person name="Fritzc C."/>
            <person name="Holzer E."/>
            <person name="Moestl D."/>
            <person name="Hilbert H."/>
            <person name="Borzym K."/>
            <person name="Langer I."/>
            <person name="Beck A."/>
            <person name="Lehrach H."/>
            <person name="Reinhardt R."/>
            <person name="Pohl T.M."/>
            <person name="Eger P."/>
            <person name="Zimmermann W."/>
            <person name="Wedler H."/>
            <person name="Wambutt R."/>
            <person name="Purnelle B."/>
            <person name="Goffeau A."/>
            <person name="Cadieu E."/>
            <person name="Dreano S."/>
            <person name="Gloux S."/>
            <person name="Lelaure V."/>
            <person name="Mottier S."/>
            <person name="Galibert F."/>
            <person name="Aves S.J."/>
            <person name="Xiang Z."/>
            <person name="Hunt C."/>
            <person name="Moore K."/>
            <person name="Hurst S.M."/>
            <person name="Lucas M."/>
            <person name="Rochet M."/>
            <person name="Gaillardin C."/>
            <person name="Tallada V.A."/>
            <person name="Garzon A."/>
            <person name="Thode G."/>
            <person name="Daga R.R."/>
            <person name="Cruzado L."/>
            <person name="Jimenez J."/>
            <person name="Sanchez M."/>
            <person name="del Rey F."/>
            <person name="Benito J."/>
            <person name="Dominguez A."/>
            <person name="Revuelta J.L."/>
            <person name="Moreno S."/>
            <person name="Armstrong J."/>
            <person name="Forsburg S.L."/>
            <person name="Cerutti L."/>
            <person name="Lowe T."/>
            <person name="McCombie W.R."/>
            <person name="Paulsen I."/>
            <person name="Potashkin J."/>
            <person name="Shpakovski G.V."/>
            <person name="Ussery D."/>
            <person name="Barrell B.G."/>
            <person name="Nurse P."/>
        </authorList>
    </citation>
    <scope>NUCLEOTIDE SEQUENCE [LARGE SCALE GENOMIC DNA]</scope>
    <source>
        <strain>972 / ATCC 24843</strain>
    </source>
</reference>
<keyword id="KW-0325">Glycoprotein</keyword>
<keyword id="KW-0469">Meiosis</keyword>
<keyword id="KW-0472">Membrane</keyword>
<keyword id="KW-1185">Reference proteome</keyword>
<keyword id="KW-0732">Signal</keyword>
<keyword id="KW-0812">Transmembrane</keyword>
<keyword id="KW-1133">Transmembrane helix</keyword>
<sequence>MFVVKTAVLLFFALFIGNTYAYTYSLDRIQALKFSSESSNVDDGPRLHCKGPACSSHSNDLAICQHNQLNVAPHLLKWTCVWPNQSSHVEVIDYNIECKKTVALSMDSITKTCILNYKLEWTYSGVLLHRPWKLFSLKPFTAAFVLLLAASYLATACFRMLGYLGTPRSRFHDNRRWNEQKFMELAVSAVEEQLSNGIQLFSNVKQRVPVPVLDESV</sequence>
<gene>
    <name type="primary">meu29</name>
    <name type="ORF">SPAC25H1.05</name>
</gene>
<proteinExistence type="inferred from homology"/>
<feature type="signal peptide" evidence="1">
    <location>
        <begin position="1"/>
        <end position="21"/>
    </location>
</feature>
<feature type="chain" id="PRO_0000045813" description="Meiotic expression up-regulated protein 29">
    <location>
        <begin position="22"/>
        <end position="217"/>
    </location>
</feature>
<feature type="topological domain" description="Extracellular" evidence="1">
    <location>
        <begin position="22"/>
        <end position="133"/>
    </location>
</feature>
<feature type="transmembrane region" description="Helical" evidence="1">
    <location>
        <begin position="134"/>
        <end position="154"/>
    </location>
</feature>
<feature type="topological domain" description="Cytoplasmic" evidence="1">
    <location>
        <begin position="155"/>
        <end position="217"/>
    </location>
</feature>
<feature type="glycosylation site" description="N-linked (GlcNAc...) asparagine" evidence="1">
    <location>
        <position position="84"/>
    </location>
</feature>